<evidence type="ECO:0000255" key="1">
    <source>
        <dbReference type="HAMAP-Rule" id="MF_00137"/>
    </source>
</evidence>
<keyword id="KW-0067">ATP-binding</keyword>
<keyword id="KW-0436">Ligase</keyword>
<keyword id="KW-0547">Nucleotide-binding</keyword>
<keyword id="KW-0658">Purine biosynthesis</keyword>
<comment type="catalytic activity">
    <reaction evidence="1">
        <text>5-amino-1-(5-phospho-D-ribosyl)imidazole-4-carboxylate + L-aspartate + ATP = (2S)-2-[5-amino-1-(5-phospho-beta-D-ribosyl)imidazole-4-carboxamido]succinate + ADP + phosphate + 2 H(+)</text>
        <dbReference type="Rhea" id="RHEA:22628"/>
        <dbReference type="ChEBI" id="CHEBI:15378"/>
        <dbReference type="ChEBI" id="CHEBI:29991"/>
        <dbReference type="ChEBI" id="CHEBI:30616"/>
        <dbReference type="ChEBI" id="CHEBI:43474"/>
        <dbReference type="ChEBI" id="CHEBI:58443"/>
        <dbReference type="ChEBI" id="CHEBI:77657"/>
        <dbReference type="ChEBI" id="CHEBI:456216"/>
        <dbReference type="EC" id="6.3.2.6"/>
    </reaction>
</comment>
<comment type="pathway">
    <text evidence="1">Purine metabolism; IMP biosynthesis via de novo pathway; 5-amino-1-(5-phospho-D-ribosyl)imidazole-4-carboxamide from 5-amino-1-(5-phospho-D-ribosyl)imidazole-4-carboxylate: step 1/2.</text>
</comment>
<comment type="similarity">
    <text evidence="1">Belongs to the SAICAR synthetase family.</text>
</comment>
<gene>
    <name evidence="1" type="primary">purC</name>
    <name type="ordered locus">NSE_0852</name>
</gene>
<accession>Q2GCS7</accession>
<proteinExistence type="inferred from homology"/>
<organism>
    <name type="scientific">Neorickettsia sennetsu (strain ATCC VR-367 / Miyayama)</name>
    <name type="common">Ehrlichia sennetsu</name>
    <dbReference type="NCBI Taxonomy" id="222891"/>
    <lineage>
        <taxon>Bacteria</taxon>
        <taxon>Pseudomonadati</taxon>
        <taxon>Pseudomonadota</taxon>
        <taxon>Alphaproteobacteria</taxon>
        <taxon>Rickettsiales</taxon>
        <taxon>Anaplasmataceae</taxon>
        <taxon>Neorickettsia</taxon>
    </lineage>
</organism>
<name>PUR7_NEOSM</name>
<feature type="chain" id="PRO_1000018742" description="Phosphoribosylaminoimidazole-succinocarboxamide synthase">
    <location>
        <begin position="1"/>
        <end position="240"/>
    </location>
</feature>
<reference key="1">
    <citation type="journal article" date="2006" name="PLoS Genet.">
        <title>Comparative genomics of emerging human ehrlichiosis agents.</title>
        <authorList>
            <person name="Dunning Hotopp J.C."/>
            <person name="Lin M."/>
            <person name="Madupu R."/>
            <person name="Crabtree J."/>
            <person name="Angiuoli S.V."/>
            <person name="Eisen J.A."/>
            <person name="Seshadri R."/>
            <person name="Ren Q."/>
            <person name="Wu M."/>
            <person name="Utterback T.R."/>
            <person name="Smith S."/>
            <person name="Lewis M."/>
            <person name="Khouri H."/>
            <person name="Zhang C."/>
            <person name="Niu H."/>
            <person name="Lin Q."/>
            <person name="Ohashi N."/>
            <person name="Zhi N."/>
            <person name="Nelson W.C."/>
            <person name="Brinkac L.M."/>
            <person name="Dodson R.J."/>
            <person name="Rosovitz M.J."/>
            <person name="Sundaram J.P."/>
            <person name="Daugherty S.C."/>
            <person name="Davidsen T."/>
            <person name="Durkin A.S."/>
            <person name="Gwinn M.L."/>
            <person name="Haft D.H."/>
            <person name="Selengut J.D."/>
            <person name="Sullivan S.A."/>
            <person name="Zafar N."/>
            <person name="Zhou L."/>
            <person name="Benahmed F."/>
            <person name="Forberger H."/>
            <person name="Halpin R."/>
            <person name="Mulligan S."/>
            <person name="Robinson J."/>
            <person name="White O."/>
            <person name="Rikihisa Y."/>
            <person name="Tettelin H."/>
        </authorList>
    </citation>
    <scope>NUCLEOTIDE SEQUENCE [LARGE SCALE GENOMIC DNA]</scope>
    <source>
        <strain>ATCC VR-367 / Miyayama</strain>
    </source>
</reference>
<protein>
    <recommendedName>
        <fullName evidence="1">Phosphoribosylaminoimidazole-succinocarboxamide synthase</fullName>
        <ecNumber evidence="1">6.3.2.6</ecNumber>
    </recommendedName>
    <alternativeName>
        <fullName evidence="1">SAICAR synthetase</fullName>
    </alternativeName>
</protein>
<sequence>MRERRKIYEGKAKILFSFPDNPNLVTQHFKDDVTAYNNRKHSVIPGKGVINNYISAFFMQNLQNVGIKTHFVKVLNMREQLVKKAELIPIEVVIRNIVAGGLAKRLGLEEGMILDAPLIETYYKSDSLGDPMVTDDHILSFNWLKLSEIEEMKVMAWRINDFLSGALSSAGIILVDLKLEFGFYDDQIILIDEISPDTCRFWDTETKEKMDKDRFRRDLGGVSKYYREVARRLGILNGSF</sequence>
<dbReference type="EC" id="6.3.2.6" evidence="1"/>
<dbReference type="EMBL" id="CP000237">
    <property type="protein sequence ID" value="ABD45892.1"/>
    <property type="molecule type" value="Genomic_DNA"/>
</dbReference>
<dbReference type="RefSeq" id="WP_011452225.1">
    <property type="nucleotide sequence ID" value="NC_007798.1"/>
</dbReference>
<dbReference type="SMR" id="Q2GCS7"/>
<dbReference type="STRING" id="222891.NSE_0852"/>
<dbReference type="KEGG" id="nse:NSE_0852"/>
<dbReference type="eggNOG" id="COG0152">
    <property type="taxonomic scope" value="Bacteria"/>
</dbReference>
<dbReference type="HOGENOM" id="CLU_061495_2_0_5"/>
<dbReference type="OrthoDB" id="9801549at2"/>
<dbReference type="UniPathway" id="UPA00074">
    <property type="reaction ID" value="UER00131"/>
</dbReference>
<dbReference type="Proteomes" id="UP000001942">
    <property type="component" value="Chromosome"/>
</dbReference>
<dbReference type="GO" id="GO:0005829">
    <property type="term" value="C:cytosol"/>
    <property type="evidence" value="ECO:0007669"/>
    <property type="project" value="TreeGrafter"/>
</dbReference>
<dbReference type="GO" id="GO:0005524">
    <property type="term" value="F:ATP binding"/>
    <property type="evidence" value="ECO:0007669"/>
    <property type="project" value="UniProtKB-KW"/>
</dbReference>
<dbReference type="GO" id="GO:0004639">
    <property type="term" value="F:phosphoribosylaminoimidazolesuccinocarboxamide synthase activity"/>
    <property type="evidence" value="ECO:0007669"/>
    <property type="project" value="UniProtKB-UniRule"/>
</dbReference>
<dbReference type="GO" id="GO:0006189">
    <property type="term" value="P:'de novo' IMP biosynthetic process"/>
    <property type="evidence" value="ECO:0007669"/>
    <property type="project" value="UniProtKB-UniRule"/>
</dbReference>
<dbReference type="GO" id="GO:0009236">
    <property type="term" value="P:cobalamin biosynthetic process"/>
    <property type="evidence" value="ECO:0007669"/>
    <property type="project" value="InterPro"/>
</dbReference>
<dbReference type="CDD" id="cd01415">
    <property type="entry name" value="SAICAR_synt_PurC"/>
    <property type="match status" value="1"/>
</dbReference>
<dbReference type="FunFam" id="3.30.470.20:FF:000006">
    <property type="entry name" value="Phosphoribosylaminoimidazole-succinocarboxamide synthase"/>
    <property type="match status" value="1"/>
</dbReference>
<dbReference type="Gene3D" id="3.30.470.20">
    <property type="entry name" value="ATP-grasp fold, B domain"/>
    <property type="match status" value="1"/>
</dbReference>
<dbReference type="Gene3D" id="3.30.200.20">
    <property type="entry name" value="Phosphorylase Kinase, domain 1"/>
    <property type="match status" value="1"/>
</dbReference>
<dbReference type="HAMAP" id="MF_00137">
    <property type="entry name" value="SAICAR_synth"/>
    <property type="match status" value="1"/>
</dbReference>
<dbReference type="InterPro" id="IPR028923">
    <property type="entry name" value="SAICAR_synt/ADE2_N"/>
</dbReference>
<dbReference type="InterPro" id="IPR033934">
    <property type="entry name" value="SAICAR_synt_PurC"/>
</dbReference>
<dbReference type="InterPro" id="IPR001636">
    <property type="entry name" value="SAICAR_synth"/>
</dbReference>
<dbReference type="InterPro" id="IPR050089">
    <property type="entry name" value="SAICAR_synthetase"/>
</dbReference>
<dbReference type="InterPro" id="IPR018236">
    <property type="entry name" value="SAICAR_synthetase_CS"/>
</dbReference>
<dbReference type="NCBIfam" id="TIGR00081">
    <property type="entry name" value="purC"/>
    <property type="match status" value="1"/>
</dbReference>
<dbReference type="PANTHER" id="PTHR43599">
    <property type="entry name" value="MULTIFUNCTIONAL PROTEIN ADE2"/>
    <property type="match status" value="1"/>
</dbReference>
<dbReference type="PANTHER" id="PTHR43599:SF3">
    <property type="entry name" value="SI:DKEY-6E2.2"/>
    <property type="match status" value="1"/>
</dbReference>
<dbReference type="Pfam" id="PF01259">
    <property type="entry name" value="SAICAR_synt"/>
    <property type="match status" value="1"/>
</dbReference>
<dbReference type="SUPFAM" id="SSF56104">
    <property type="entry name" value="SAICAR synthase-like"/>
    <property type="match status" value="1"/>
</dbReference>
<dbReference type="PROSITE" id="PS01058">
    <property type="entry name" value="SAICAR_SYNTHETASE_2"/>
    <property type="match status" value="1"/>
</dbReference>